<keyword id="KW-1003">Cell membrane</keyword>
<keyword id="KW-0966">Cell projection</keyword>
<keyword id="KW-0967">Endosome</keyword>
<keyword id="KW-0458">Lysosome</keyword>
<keyword id="KW-0472">Membrane</keyword>
<keyword id="KW-1185">Reference proteome</keyword>
<keyword id="KW-0812">Transmembrane</keyword>
<keyword id="KW-1133">Transmembrane helix</keyword>
<keyword id="KW-0813">Transport</keyword>
<keyword id="KW-0832">Ubl conjugation</keyword>
<proteinExistence type="evidence at transcript level"/>
<sequence>MKMVAPWTRFYSNSCCLCCHVRTGTILLGVWYLIINAVVLLILLSALADPDQYHFSSSELGGDFEFMDDANMCIAIAISLLMILICAMATYGAYKQRAAWIIPFFCYQIFDFALNTLVAITVLVYPNSIQEYIRQLPPNFPYRDDVMSVNPTCLVLIILLFISIILTFKGYLISCVWNCYRYINGRNSSDVLVYVTSNDTTVLLPPYDDATVNGAAKEPPPPYVSA</sequence>
<dbReference type="EMBL" id="AB169236">
    <property type="protein sequence ID" value="BAE01327.1"/>
    <property type="molecule type" value="mRNA"/>
</dbReference>
<dbReference type="STRING" id="9541.ENSMFAP00000029769"/>
<dbReference type="Ensembl" id="ENSMFAT00000004002.2">
    <property type="protein sequence ID" value="ENSMFAP00000029799.2"/>
    <property type="gene ID" value="ENSMFAG00000042049.2"/>
</dbReference>
<dbReference type="VEuPathDB" id="HostDB:ENSMFAG00000042049"/>
<dbReference type="GeneTree" id="ENSGT00940000153446"/>
<dbReference type="OMA" id="LTDPGQY"/>
<dbReference type="Proteomes" id="UP000233100">
    <property type="component" value="Chromosome 8"/>
</dbReference>
<dbReference type="Bgee" id="ENSMFAG00000042049">
    <property type="expression patterns" value="Expressed in heart and 13 other cell types or tissues"/>
</dbReference>
<dbReference type="GO" id="GO:0042995">
    <property type="term" value="C:cell projection"/>
    <property type="evidence" value="ECO:0000250"/>
    <property type="project" value="UniProtKB"/>
</dbReference>
<dbReference type="GO" id="GO:0005769">
    <property type="term" value="C:early endosome"/>
    <property type="evidence" value="ECO:0000250"/>
    <property type="project" value="UniProtKB"/>
</dbReference>
<dbReference type="GO" id="GO:0005768">
    <property type="term" value="C:endosome"/>
    <property type="evidence" value="ECO:0000250"/>
    <property type="project" value="UniProtKB"/>
</dbReference>
<dbReference type="GO" id="GO:0031902">
    <property type="term" value="C:late endosome membrane"/>
    <property type="evidence" value="ECO:0000250"/>
    <property type="project" value="UniProtKB"/>
</dbReference>
<dbReference type="GO" id="GO:0005765">
    <property type="term" value="C:lysosomal membrane"/>
    <property type="evidence" value="ECO:0000250"/>
    <property type="project" value="UniProtKB"/>
</dbReference>
<dbReference type="GO" id="GO:0005764">
    <property type="term" value="C:lysosome"/>
    <property type="evidence" value="ECO:0000250"/>
    <property type="project" value="UniProtKB"/>
</dbReference>
<dbReference type="GO" id="GO:0032585">
    <property type="term" value="C:multivesicular body membrane"/>
    <property type="evidence" value="ECO:0000250"/>
    <property type="project" value="UniProtKB"/>
</dbReference>
<dbReference type="GO" id="GO:0097487">
    <property type="term" value="C:multivesicular body, internal vesicle"/>
    <property type="evidence" value="ECO:0000250"/>
    <property type="project" value="UniProtKB"/>
</dbReference>
<dbReference type="GO" id="GO:0005886">
    <property type="term" value="C:plasma membrane"/>
    <property type="evidence" value="ECO:0000250"/>
    <property type="project" value="UniProtKB"/>
</dbReference>
<dbReference type="GO" id="GO:0097001">
    <property type="term" value="F:ceramide binding"/>
    <property type="evidence" value="ECO:0000250"/>
    <property type="project" value="UniProtKB"/>
</dbReference>
<dbReference type="GO" id="GO:1902936">
    <property type="term" value="F:phosphatidylinositol bisphosphate binding"/>
    <property type="evidence" value="ECO:0000250"/>
    <property type="project" value="UniProtKB"/>
</dbReference>
<dbReference type="GO" id="GO:0007032">
    <property type="term" value="P:endosome organization"/>
    <property type="evidence" value="ECO:0000250"/>
    <property type="project" value="UniProtKB"/>
</dbReference>
<dbReference type="GO" id="GO:0032509">
    <property type="term" value="P:endosome transport via multivesicular body sorting pathway"/>
    <property type="evidence" value="ECO:0000250"/>
    <property type="project" value="UniProtKB"/>
</dbReference>
<dbReference type="GO" id="GO:1905166">
    <property type="term" value="P:negative regulation of lysosomal protein catabolic process"/>
    <property type="evidence" value="ECO:0000250"/>
    <property type="project" value="UniProtKB"/>
</dbReference>
<dbReference type="GO" id="GO:0032911">
    <property type="term" value="P:negative regulation of transforming growth factor beta1 production"/>
    <property type="evidence" value="ECO:0000250"/>
    <property type="project" value="UniProtKB"/>
</dbReference>
<dbReference type="GO" id="GO:0097213">
    <property type="term" value="P:regulation of lysosomal membrane permeability"/>
    <property type="evidence" value="ECO:0000250"/>
    <property type="project" value="UniProtKB"/>
</dbReference>
<dbReference type="GO" id="GO:1905671">
    <property type="term" value="P:regulation of lysosome organization"/>
    <property type="evidence" value="ECO:0000250"/>
    <property type="project" value="UniProtKB"/>
</dbReference>
<dbReference type="InterPro" id="IPR004687">
    <property type="entry name" value="LAPTM4/5"/>
</dbReference>
<dbReference type="InterPro" id="IPR051115">
    <property type="entry name" value="LAPTM_transporter"/>
</dbReference>
<dbReference type="PANTHER" id="PTHR12479">
    <property type="entry name" value="LYSOSOMAL-ASSOCIATED TRANSMEMBRANE PROTEIN"/>
    <property type="match status" value="1"/>
</dbReference>
<dbReference type="PANTHER" id="PTHR12479:SF6">
    <property type="entry name" value="LYSOSOMAL-ASSOCIATED TRANSMEMBRANE PROTEIN 4B"/>
    <property type="match status" value="1"/>
</dbReference>
<dbReference type="Pfam" id="PF03821">
    <property type="entry name" value="Mtp"/>
    <property type="match status" value="1"/>
</dbReference>
<reference key="1">
    <citation type="submission" date="2005-06" db="EMBL/GenBank/DDBJ databases">
        <title>DNA sequences of macaque genes expressed in brain or testis and its evolutionary implications.</title>
        <authorList>
            <consortium name="International consortium for macaque cDNA sequencing and analysis"/>
        </authorList>
    </citation>
    <scope>NUCLEOTIDE SEQUENCE [LARGE SCALE MRNA]</scope>
    <source>
        <tissue>Testis</tissue>
    </source>
</reference>
<accession>Q4R6E8</accession>
<gene>
    <name evidence="1" type="primary">LAPTM4B</name>
    <name type="ORF">QtsA-18169</name>
</gene>
<protein>
    <recommendedName>
        <fullName evidence="1">Lysosomal-associated transmembrane protein 4B</fullName>
    </recommendedName>
</protein>
<evidence type="ECO:0000250" key="1">
    <source>
        <dbReference type="UniProtKB" id="Q86VI4"/>
    </source>
</evidence>
<evidence type="ECO:0000255" key="2"/>
<evidence type="ECO:0000305" key="3"/>
<feature type="chain" id="PRO_0000249722" description="Lysosomal-associated transmembrane protein 4B">
    <location>
        <begin position="1"/>
        <end position="226"/>
    </location>
</feature>
<feature type="transmembrane region" description="Helical" evidence="2">
    <location>
        <begin position="26"/>
        <end position="46"/>
    </location>
</feature>
<feature type="transmembrane region" description="Helical" evidence="2">
    <location>
        <begin position="72"/>
        <end position="92"/>
    </location>
</feature>
<feature type="transmembrane region" description="Helical" evidence="2">
    <location>
        <begin position="100"/>
        <end position="120"/>
    </location>
</feature>
<feature type="transmembrane region" description="Helical" evidence="2">
    <location>
        <begin position="153"/>
        <end position="173"/>
    </location>
</feature>
<feature type="region of interest" description="Required for NEDD4 interaction" evidence="1">
    <location>
        <begin position="205"/>
        <end position="221"/>
    </location>
</feature>
<organism>
    <name type="scientific">Macaca fascicularis</name>
    <name type="common">Crab-eating macaque</name>
    <name type="synonym">Cynomolgus monkey</name>
    <dbReference type="NCBI Taxonomy" id="9541"/>
    <lineage>
        <taxon>Eukaryota</taxon>
        <taxon>Metazoa</taxon>
        <taxon>Chordata</taxon>
        <taxon>Craniata</taxon>
        <taxon>Vertebrata</taxon>
        <taxon>Euteleostomi</taxon>
        <taxon>Mammalia</taxon>
        <taxon>Eutheria</taxon>
        <taxon>Euarchontoglires</taxon>
        <taxon>Primates</taxon>
        <taxon>Haplorrhini</taxon>
        <taxon>Catarrhini</taxon>
        <taxon>Cercopithecidae</taxon>
        <taxon>Cercopithecinae</taxon>
        <taxon>Macaca</taxon>
    </lineage>
</organism>
<comment type="function">
    <text evidence="1">Required for optimal lysosomal function. Blocks EGF-stimulated EGFR intraluminal sorting and degradation. Conversely by binding with the phosphatidylinositol 4,5-bisphosphate, regulates its PIP5K1C interaction, inhibits HGS ubiquitination and relieves LAPTM4B inhibition of EGFR degradation. Recruits SLC3A2 and SLC7A5 (the Leu transporter) to the lysosome, promoting entry of leucine and other essential amino acid (EAA) into the lysosome, stimulating activation of proton-transporting vacuolar (V)-ATPase protein pump (V-ATPase) and hence mTORC1 activation. Plays a role as negative regulator of TGFB1 production in regulatory T cells. Binds ceramide and facilitates its exit from late endosome in order to control cell death pathways.</text>
</comment>
<comment type="subunit">
    <text evidence="1">Homooligomer; upon reaching the lysosomes. Interacts with MCOLN1. Interacts with NEDD4; may play a role in the lysosomal sorting of LAPTM4B; enhances HGS association with NEDD4; mediates inhibition of EGFR degradation. Interacts with PIP5K1C; promotes SNX5 association with LAPTM4B; kinase activity of PIP5K1C is required; interaction is regulated by phosphatidylinositol 4,5-bisphosphate generated by PIP5K1C. Interacts with HGS; promotes HGS ubiquitination. Interacts with SNX5. Interacts with SLC3A2 and SLC7A5; recruits SLC3A2 and SLC7A5 to lysosomes to promote leucine uptake into these organelles and is required for mTORC1 activation. Interacts with LRRC32; decreases TGFB1 production in regulatory T cells. Interacts with BECN1; competes with EGFR for LAPTM4B binding; regulates EGFR activity. Interacts with EGFR; positively correlates with EGFR activation.</text>
</comment>
<comment type="subcellular location">
    <subcellularLocation>
        <location evidence="1">Endomembrane system</location>
        <topology evidence="1">Multi-pass membrane protein</topology>
    </subcellularLocation>
    <subcellularLocation>
        <location evidence="1">Late endosome membrane</location>
    </subcellularLocation>
    <subcellularLocation>
        <location evidence="1">Cell membrane</location>
    </subcellularLocation>
    <subcellularLocation>
        <location evidence="1">Cell projection</location>
    </subcellularLocation>
    <subcellularLocation>
        <location evidence="1">Lysosome membrane</location>
    </subcellularLocation>
    <subcellularLocation>
        <location evidence="1">Endosome membrane</location>
    </subcellularLocation>
    <subcellularLocation>
        <location evidence="1">Endosome</location>
        <location evidence="1">Multivesicular body membrane</location>
    </subcellularLocation>
    <subcellularLocation>
        <location evidence="1">Endosome</location>
        <location evidence="1">Multivesicular body lumen</location>
    </subcellularLocation>
</comment>
<comment type="PTM">
    <text evidence="1">Undergoes proteolytic cleavage following delivery to the lysosomes.</text>
</comment>
<comment type="PTM">
    <text evidence="1">Ubiquitinated by NEDD4.</text>
</comment>
<comment type="similarity">
    <text evidence="3">Belongs to the LAPTM4/LAPTM5 transporter family.</text>
</comment>
<name>LAP4B_MACFA</name>